<proteinExistence type="inferred from homology"/>
<sequence>MLYSPLYQSIRLILFGALGLSSLTVSAAINQTDSMMPEPLVTDSSNQYADDESIQESLKRLAEFYERTPDTNVATSNNTGTNVSDEQSNIQNSLTPVTTNIPTVGSNLRLLPHTVDSAARCEGQWVYPKKNPNYQRAVNEAGASNGQPAPNLNGLPNNQAPLFAESDYGYYDNVDYAELSGNVIIDQGTQHIEAEKIVLDLSNGVAAAQGKVMFTDQATGNASATQTQDRVQKNGKTSLTDKAAQGGLIGVADNLNYNTETGQSTATNVAFASVELQAHGYAKRLNRPNESQYELDEVMYSTCPPTNRKWQFDAKSIDLDTETGRGEAYNTTFRIADVPVFYLPYFNFPIDSRRGSGFLLPNASISSENGLEVDVPYYFNLAPNYDATLSTHIYTTRNPMLSGEFRYLTENYGEGIFNGSYLPNDKEYDGEDRRSLFYDHYWSSTSIPRLSGEAKYSHVSDADYLNDFDTLGLSDNTLNLARRAQLNYYNDYVDGELKVETFQTLDALNNNGQMLQDKDKPYSRLPQLNLDYRLPWAKNFDITGVSDSAYFKKSIDDGSENEKSGTRFYNKLSASYPMENSWGYIKPKLSLQHLFTSYDKDSLVDNSLDKDDGNQSVFVPQASIDAGLHFYQAGSPFGAFDDTLGGYRLLSPRLKYTYSPFKDQNNIPNFNTRIASINYEQLFSDSWFLGHDRLQDLHAFTPGINYRYIDATGVTRFDGSIAEQFYIDDGGVTLDNTKPVFTSSSSGLVWDTSTQPYNNVWVDVSGALTNSYDLNYITTELRYQPSDNSLFNVGFIKRQRDENTNQLPLSALTASAVFPINNNWRVLAQGQYDYNRNQMLDSLIGIDYEDCCFGFAVYGRRYYNDLNIADKPTQAIMAEVRLSGLGSGSSRLTRLLADKVLGFEPVQSAWKD</sequence>
<protein>
    <recommendedName>
        <fullName evidence="1">LPS-assembly protein LptD</fullName>
    </recommendedName>
</protein>
<accession>Q4FRJ1</accession>
<organism>
    <name type="scientific">Psychrobacter arcticus (strain DSM 17307 / VKM B-2377 / 273-4)</name>
    <dbReference type="NCBI Taxonomy" id="259536"/>
    <lineage>
        <taxon>Bacteria</taxon>
        <taxon>Pseudomonadati</taxon>
        <taxon>Pseudomonadota</taxon>
        <taxon>Gammaproteobacteria</taxon>
        <taxon>Moraxellales</taxon>
        <taxon>Moraxellaceae</taxon>
        <taxon>Psychrobacter</taxon>
    </lineage>
</organism>
<gene>
    <name evidence="1" type="primary">lptD</name>
    <name type="synonym">imp</name>
    <name type="synonym">ostA</name>
    <name type="ordered locus">Psyc_1519</name>
</gene>
<evidence type="ECO:0000255" key="1">
    <source>
        <dbReference type="HAMAP-Rule" id="MF_01411"/>
    </source>
</evidence>
<name>LPTD_PSYA2</name>
<feature type="signal peptide" evidence="1">
    <location>
        <begin position="1"/>
        <end position="27"/>
    </location>
</feature>
<feature type="chain" id="PRO_0000281629" description="LPS-assembly protein LptD">
    <location>
        <begin position="28"/>
        <end position="912"/>
    </location>
</feature>
<keyword id="KW-0998">Cell outer membrane</keyword>
<keyword id="KW-0472">Membrane</keyword>
<keyword id="KW-1185">Reference proteome</keyword>
<keyword id="KW-0732">Signal</keyword>
<comment type="function">
    <text evidence="1">Together with LptE, is involved in the assembly of lipopolysaccharide (LPS) at the surface of the outer membrane.</text>
</comment>
<comment type="subunit">
    <text evidence="1">Component of the lipopolysaccharide transport and assembly complex. Interacts with LptE and LptA.</text>
</comment>
<comment type="subcellular location">
    <subcellularLocation>
        <location evidence="1">Cell outer membrane</location>
    </subcellularLocation>
</comment>
<comment type="similarity">
    <text evidence="1">Belongs to the LptD family.</text>
</comment>
<reference key="1">
    <citation type="journal article" date="2010" name="Appl. Environ. Microbiol.">
        <title>The genome sequence of Psychrobacter arcticus 273-4, a psychroactive Siberian permafrost bacterium, reveals mechanisms for adaptation to low-temperature growth.</title>
        <authorList>
            <person name="Ayala-del-Rio H.L."/>
            <person name="Chain P.S."/>
            <person name="Grzymski J.J."/>
            <person name="Ponder M.A."/>
            <person name="Ivanova N."/>
            <person name="Bergholz P.W."/>
            <person name="Di Bartolo G."/>
            <person name="Hauser L."/>
            <person name="Land M."/>
            <person name="Bakermans C."/>
            <person name="Rodrigues D."/>
            <person name="Klappenbach J."/>
            <person name="Zarka D."/>
            <person name="Larimer F."/>
            <person name="Richardson P."/>
            <person name="Murray A."/>
            <person name="Thomashow M."/>
            <person name="Tiedje J.M."/>
        </authorList>
    </citation>
    <scope>NUCLEOTIDE SEQUENCE [LARGE SCALE GENOMIC DNA]</scope>
    <source>
        <strain>DSM 17307 / VKM B-2377 / 273-4</strain>
    </source>
</reference>
<dbReference type="EMBL" id="CP000082">
    <property type="protein sequence ID" value="AAZ19367.1"/>
    <property type="molecule type" value="Genomic_DNA"/>
</dbReference>
<dbReference type="RefSeq" id="WP_011280784.1">
    <property type="nucleotide sequence ID" value="NC_007204.1"/>
</dbReference>
<dbReference type="SMR" id="Q4FRJ1"/>
<dbReference type="STRING" id="259536.Psyc_1519"/>
<dbReference type="KEGG" id="par:Psyc_1519"/>
<dbReference type="eggNOG" id="COG1452">
    <property type="taxonomic scope" value="Bacteria"/>
</dbReference>
<dbReference type="HOGENOM" id="CLU_009039_1_0_6"/>
<dbReference type="OrthoDB" id="9760225at2"/>
<dbReference type="Proteomes" id="UP000000546">
    <property type="component" value="Chromosome"/>
</dbReference>
<dbReference type="GO" id="GO:0009279">
    <property type="term" value="C:cell outer membrane"/>
    <property type="evidence" value="ECO:0007669"/>
    <property type="project" value="UniProtKB-SubCell"/>
</dbReference>
<dbReference type="GO" id="GO:1990351">
    <property type="term" value="C:transporter complex"/>
    <property type="evidence" value="ECO:0007669"/>
    <property type="project" value="TreeGrafter"/>
</dbReference>
<dbReference type="GO" id="GO:0043165">
    <property type="term" value="P:Gram-negative-bacterium-type cell outer membrane assembly"/>
    <property type="evidence" value="ECO:0007669"/>
    <property type="project" value="UniProtKB-UniRule"/>
</dbReference>
<dbReference type="GO" id="GO:0015920">
    <property type="term" value="P:lipopolysaccharide transport"/>
    <property type="evidence" value="ECO:0007669"/>
    <property type="project" value="InterPro"/>
</dbReference>
<dbReference type="Gene3D" id="2.60.450.10">
    <property type="entry name" value="Lipopolysaccharide (LPS) transport protein A like domain"/>
    <property type="match status" value="1"/>
</dbReference>
<dbReference type="HAMAP" id="MF_01411">
    <property type="entry name" value="LPS_assembly_LptD"/>
    <property type="match status" value="1"/>
</dbReference>
<dbReference type="InterPro" id="IPR020889">
    <property type="entry name" value="LipoPS_assembly_LptD"/>
</dbReference>
<dbReference type="InterPro" id="IPR050218">
    <property type="entry name" value="LptD"/>
</dbReference>
<dbReference type="InterPro" id="IPR007543">
    <property type="entry name" value="LptD_C"/>
</dbReference>
<dbReference type="PANTHER" id="PTHR30189">
    <property type="entry name" value="LPS-ASSEMBLY PROTEIN"/>
    <property type="match status" value="1"/>
</dbReference>
<dbReference type="PANTHER" id="PTHR30189:SF1">
    <property type="entry name" value="LPS-ASSEMBLY PROTEIN LPTD"/>
    <property type="match status" value="1"/>
</dbReference>
<dbReference type="Pfam" id="PF04453">
    <property type="entry name" value="LptD"/>
    <property type="match status" value="1"/>
</dbReference>